<comment type="function">
    <text evidence="1">Catalyzes the 2-thiolation of uridine at the wobble position (U34) of tRNA, leading to the formation of s(2)U34.</text>
</comment>
<comment type="catalytic activity">
    <reaction evidence="1">
        <text>S-sulfanyl-L-cysteinyl-[protein] + uridine(34) in tRNA + AH2 + ATP = 2-thiouridine(34) in tRNA + L-cysteinyl-[protein] + A + AMP + diphosphate + H(+)</text>
        <dbReference type="Rhea" id="RHEA:47032"/>
        <dbReference type="Rhea" id="RHEA-COMP:10131"/>
        <dbReference type="Rhea" id="RHEA-COMP:11726"/>
        <dbReference type="Rhea" id="RHEA-COMP:11727"/>
        <dbReference type="Rhea" id="RHEA-COMP:11728"/>
        <dbReference type="ChEBI" id="CHEBI:13193"/>
        <dbReference type="ChEBI" id="CHEBI:15378"/>
        <dbReference type="ChEBI" id="CHEBI:17499"/>
        <dbReference type="ChEBI" id="CHEBI:29950"/>
        <dbReference type="ChEBI" id="CHEBI:30616"/>
        <dbReference type="ChEBI" id="CHEBI:33019"/>
        <dbReference type="ChEBI" id="CHEBI:61963"/>
        <dbReference type="ChEBI" id="CHEBI:65315"/>
        <dbReference type="ChEBI" id="CHEBI:87170"/>
        <dbReference type="ChEBI" id="CHEBI:456215"/>
        <dbReference type="EC" id="2.8.1.13"/>
    </reaction>
</comment>
<comment type="subcellular location">
    <subcellularLocation>
        <location evidence="1">Cytoplasm</location>
    </subcellularLocation>
</comment>
<comment type="similarity">
    <text evidence="1">Belongs to the MnmA/TRMU family.</text>
</comment>
<accession>A7Z745</accession>
<evidence type="ECO:0000255" key="1">
    <source>
        <dbReference type="HAMAP-Rule" id="MF_00144"/>
    </source>
</evidence>
<dbReference type="EC" id="2.8.1.13" evidence="1"/>
<dbReference type="EMBL" id="CP000560">
    <property type="protein sequence ID" value="ABS74821.1"/>
    <property type="molecule type" value="Genomic_DNA"/>
</dbReference>
<dbReference type="RefSeq" id="WP_012118077.1">
    <property type="nucleotide sequence ID" value="NC_009725.2"/>
</dbReference>
<dbReference type="SMR" id="A7Z745"/>
<dbReference type="GeneID" id="93081602"/>
<dbReference type="KEGG" id="bay:RBAM_024610"/>
<dbReference type="HOGENOM" id="CLU_035188_1_0_9"/>
<dbReference type="Proteomes" id="UP000001120">
    <property type="component" value="Chromosome"/>
</dbReference>
<dbReference type="GO" id="GO:0005737">
    <property type="term" value="C:cytoplasm"/>
    <property type="evidence" value="ECO:0007669"/>
    <property type="project" value="UniProtKB-SubCell"/>
</dbReference>
<dbReference type="GO" id="GO:0005524">
    <property type="term" value="F:ATP binding"/>
    <property type="evidence" value="ECO:0007669"/>
    <property type="project" value="UniProtKB-KW"/>
</dbReference>
<dbReference type="GO" id="GO:0000049">
    <property type="term" value="F:tRNA binding"/>
    <property type="evidence" value="ECO:0007669"/>
    <property type="project" value="UniProtKB-KW"/>
</dbReference>
<dbReference type="GO" id="GO:0103016">
    <property type="term" value="F:tRNA-uridine 2-sulfurtransferase activity"/>
    <property type="evidence" value="ECO:0007669"/>
    <property type="project" value="UniProtKB-EC"/>
</dbReference>
<dbReference type="GO" id="GO:0002143">
    <property type="term" value="P:tRNA wobble position uridine thiolation"/>
    <property type="evidence" value="ECO:0007669"/>
    <property type="project" value="TreeGrafter"/>
</dbReference>
<dbReference type="CDD" id="cd01998">
    <property type="entry name" value="MnmA_TRMU-like"/>
    <property type="match status" value="1"/>
</dbReference>
<dbReference type="FunFam" id="2.30.30.280:FF:000001">
    <property type="entry name" value="tRNA-specific 2-thiouridylase MnmA"/>
    <property type="match status" value="1"/>
</dbReference>
<dbReference type="FunFam" id="2.40.30.10:FF:000023">
    <property type="entry name" value="tRNA-specific 2-thiouridylase MnmA"/>
    <property type="match status" value="1"/>
</dbReference>
<dbReference type="FunFam" id="3.40.50.620:FF:000004">
    <property type="entry name" value="tRNA-specific 2-thiouridylase MnmA"/>
    <property type="match status" value="1"/>
</dbReference>
<dbReference type="Gene3D" id="2.30.30.280">
    <property type="entry name" value="Adenine nucleotide alpha hydrolases-like domains"/>
    <property type="match status" value="1"/>
</dbReference>
<dbReference type="Gene3D" id="3.40.50.620">
    <property type="entry name" value="HUPs"/>
    <property type="match status" value="1"/>
</dbReference>
<dbReference type="Gene3D" id="2.40.30.10">
    <property type="entry name" value="Translation factors"/>
    <property type="match status" value="1"/>
</dbReference>
<dbReference type="HAMAP" id="MF_00144">
    <property type="entry name" value="tRNA_thiouridyl_MnmA"/>
    <property type="match status" value="1"/>
</dbReference>
<dbReference type="InterPro" id="IPR004506">
    <property type="entry name" value="MnmA-like"/>
</dbReference>
<dbReference type="InterPro" id="IPR046885">
    <property type="entry name" value="MnmA-like_C"/>
</dbReference>
<dbReference type="InterPro" id="IPR046884">
    <property type="entry name" value="MnmA-like_central"/>
</dbReference>
<dbReference type="InterPro" id="IPR023382">
    <property type="entry name" value="MnmA-like_central_sf"/>
</dbReference>
<dbReference type="InterPro" id="IPR014729">
    <property type="entry name" value="Rossmann-like_a/b/a_fold"/>
</dbReference>
<dbReference type="NCBIfam" id="NF001138">
    <property type="entry name" value="PRK00143.1"/>
    <property type="match status" value="1"/>
</dbReference>
<dbReference type="NCBIfam" id="TIGR00420">
    <property type="entry name" value="trmU"/>
    <property type="match status" value="1"/>
</dbReference>
<dbReference type="PANTHER" id="PTHR11933:SF5">
    <property type="entry name" value="MITOCHONDRIAL TRNA-SPECIFIC 2-THIOURIDYLASE 1"/>
    <property type="match status" value="1"/>
</dbReference>
<dbReference type="PANTHER" id="PTHR11933">
    <property type="entry name" value="TRNA 5-METHYLAMINOMETHYL-2-THIOURIDYLATE -METHYLTRANSFERASE"/>
    <property type="match status" value="1"/>
</dbReference>
<dbReference type="Pfam" id="PF03054">
    <property type="entry name" value="tRNA_Me_trans"/>
    <property type="match status" value="1"/>
</dbReference>
<dbReference type="Pfam" id="PF20258">
    <property type="entry name" value="tRNA_Me_trans_C"/>
    <property type="match status" value="1"/>
</dbReference>
<dbReference type="Pfam" id="PF20259">
    <property type="entry name" value="tRNA_Me_trans_M"/>
    <property type="match status" value="1"/>
</dbReference>
<dbReference type="SUPFAM" id="SSF52402">
    <property type="entry name" value="Adenine nucleotide alpha hydrolases-like"/>
    <property type="match status" value="1"/>
</dbReference>
<keyword id="KW-0067">ATP-binding</keyword>
<keyword id="KW-0963">Cytoplasm</keyword>
<keyword id="KW-1015">Disulfide bond</keyword>
<keyword id="KW-0547">Nucleotide-binding</keyword>
<keyword id="KW-0694">RNA-binding</keyword>
<keyword id="KW-0808">Transferase</keyword>
<keyword id="KW-0819">tRNA processing</keyword>
<keyword id="KW-0820">tRNA-binding</keyword>
<protein>
    <recommendedName>
        <fullName evidence="1">tRNA-specific 2-thiouridylase MnmA</fullName>
        <ecNumber evidence="1">2.8.1.13</ecNumber>
    </recommendedName>
</protein>
<gene>
    <name evidence="1" type="primary">mnmA</name>
    <name type="synonym">trmU</name>
    <name type="ordered locus">RBAM_024610</name>
</gene>
<proteinExistence type="inferred from homology"/>
<name>MNMA_BACVZ</name>
<organism>
    <name type="scientific">Bacillus velezensis (strain DSM 23117 / BGSC 10A6 / LMG 26770 / FZB42)</name>
    <name type="common">Bacillus amyloliquefaciens subsp. plantarum</name>
    <dbReference type="NCBI Taxonomy" id="326423"/>
    <lineage>
        <taxon>Bacteria</taxon>
        <taxon>Bacillati</taxon>
        <taxon>Bacillota</taxon>
        <taxon>Bacilli</taxon>
        <taxon>Bacillales</taxon>
        <taxon>Bacillaceae</taxon>
        <taxon>Bacillus</taxon>
        <taxon>Bacillus amyloliquefaciens group</taxon>
    </lineage>
</organism>
<feature type="chain" id="PRO_1000009507" description="tRNA-specific 2-thiouridylase MnmA">
    <location>
        <begin position="1"/>
        <end position="371"/>
    </location>
</feature>
<feature type="region of interest" description="Interaction with target base in tRNA" evidence="1">
    <location>
        <begin position="99"/>
        <end position="101"/>
    </location>
</feature>
<feature type="region of interest" description="Interaction with tRNA" evidence="1">
    <location>
        <begin position="150"/>
        <end position="152"/>
    </location>
</feature>
<feature type="region of interest" description="Interaction with tRNA" evidence="1">
    <location>
        <begin position="309"/>
        <end position="310"/>
    </location>
</feature>
<feature type="active site" description="Nucleophile" evidence="1">
    <location>
        <position position="104"/>
    </location>
</feature>
<feature type="active site" description="Cysteine persulfide intermediate" evidence="1">
    <location>
        <position position="200"/>
    </location>
</feature>
<feature type="binding site" evidence="1">
    <location>
        <begin position="13"/>
        <end position="20"/>
    </location>
    <ligand>
        <name>ATP</name>
        <dbReference type="ChEBI" id="CHEBI:30616"/>
    </ligand>
</feature>
<feature type="binding site" evidence="1">
    <location>
        <position position="39"/>
    </location>
    <ligand>
        <name>ATP</name>
        <dbReference type="ChEBI" id="CHEBI:30616"/>
    </ligand>
</feature>
<feature type="binding site" evidence="1">
    <location>
        <position position="128"/>
    </location>
    <ligand>
        <name>ATP</name>
        <dbReference type="ChEBI" id="CHEBI:30616"/>
    </ligand>
</feature>
<feature type="site" description="Interaction with tRNA" evidence="1">
    <location>
        <position position="129"/>
    </location>
</feature>
<feature type="site" description="Interaction with tRNA" evidence="1">
    <location>
        <position position="342"/>
    </location>
</feature>
<feature type="disulfide bond" description="Alternate" evidence="1">
    <location>
        <begin position="104"/>
        <end position="200"/>
    </location>
</feature>
<sequence>MEKRPEDTRVVVGMSGGVDSSVAALLLKEQGYDVIGIFMKNWDDTDENGFCTATEDYEDVIRVCNQIGIPYYAVNFEKQYWEKVFQYFLDEYKAGRTPNPDVMCNKEIKFKAFLDHALSLGADYLATGHYARVDRSAGTVRMLRGLDENKDQTYFLNQLNQEQLSKVMFPIGDLQKSRVREIAKEAELATAAKKDSTGICFIGERNFKTFLSQYLPAQPGDMMTMDGEVKGRHDGLMYYTIGQRHGLGIGGSGEPWFAVGKDLEKNILYVDQGFHNPLLYSDKITATNVSWTRPGLMDGGEMTCTAKFRYRQEDHKVTVKMTGDDEAEVIFDGQVRAVTPGQAVVFYDGEECLGGGTIDDVYKDGTKLWYV</sequence>
<reference key="1">
    <citation type="journal article" date="2007" name="Nat. Biotechnol.">
        <title>Comparative analysis of the complete genome sequence of the plant growth-promoting bacterium Bacillus amyloliquefaciens FZB42.</title>
        <authorList>
            <person name="Chen X.H."/>
            <person name="Koumoutsi A."/>
            <person name="Scholz R."/>
            <person name="Eisenreich A."/>
            <person name="Schneider K."/>
            <person name="Heinemeyer I."/>
            <person name="Morgenstern B."/>
            <person name="Voss B."/>
            <person name="Hess W.R."/>
            <person name="Reva O."/>
            <person name="Junge H."/>
            <person name="Voigt B."/>
            <person name="Jungblut P.R."/>
            <person name="Vater J."/>
            <person name="Suessmuth R."/>
            <person name="Liesegang H."/>
            <person name="Strittmatter A."/>
            <person name="Gottschalk G."/>
            <person name="Borriss R."/>
        </authorList>
    </citation>
    <scope>NUCLEOTIDE SEQUENCE [LARGE SCALE GENOMIC DNA]</scope>
    <source>
        <strain>DSM 23117 / BGSC 10A6 / LMG 26770 / FZB42</strain>
    </source>
</reference>